<gene>
    <name evidence="4" type="primary">mthZIR</name>
</gene>
<evidence type="ECO:0000269" key="1">
    <source>
    </source>
</evidence>
<evidence type="ECO:0000303" key="2">
    <source>
    </source>
</evidence>
<evidence type="ECO:0000303" key="3">
    <source>
    </source>
</evidence>
<evidence type="ECO:0000303" key="4">
    <source>
    </source>
</evidence>
<name>T2MZ_METTF</name>
<dbReference type="EC" id="3.1.21.4" evidence="1"/>
<dbReference type="EMBL" id="X67212">
    <property type="protein sequence ID" value="CAA47652.1"/>
    <property type="molecule type" value="Genomic_DNA"/>
</dbReference>
<dbReference type="EMBL" id="X68367">
    <property type="protein sequence ID" value="CAA48446.1"/>
    <property type="molecule type" value="Genomic_DNA"/>
</dbReference>
<dbReference type="PIR" id="S26074">
    <property type="entry name" value="S26074"/>
</dbReference>
<dbReference type="RefSeq" id="NP_039774.1">
    <property type="nucleotide sequence ID" value="NC_001337.1"/>
</dbReference>
<dbReference type="RefSeq" id="WP_010889861.1">
    <property type="nucleotide sequence ID" value="NC_001337.1"/>
</dbReference>
<dbReference type="SMR" id="P29566"/>
<dbReference type="REBASE" id="2204">
    <property type="entry name" value="MthZI"/>
</dbReference>
<dbReference type="GeneID" id="24855016"/>
<dbReference type="PRO" id="PR:P29566"/>
<dbReference type="GO" id="GO:0003677">
    <property type="term" value="F:DNA binding"/>
    <property type="evidence" value="ECO:0007669"/>
    <property type="project" value="InterPro"/>
</dbReference>
<dbReference type="GO" id="GO:0009036">
    <property type="term" value="F:type II site-specific deoxyribonuclease activity"/>
    <property type="evidence" value="ECO:0007669"/>
    <property type="project" value="UniProtKB-EC"/>
</dbReference>
<dbReference type="GO" id="GO:0009307">
    <property type="term" value="P:DNA restriction-modification system"/>
    <property type="evidence" value="ECO:0007669"/>
    <property type="project" value="UniProtKB-KW"/>
</dbReference>
<dbReference type="InterPro" id="IPR019068">
    <property type="entry name" value="Restrct_endonuc_II_MjaI"/>
</dbReference>
<dbReference type="Pfam" id="PF09568">
    <property type="entry name" value="RE_MjaI"/>
    <property type="match status" value="1"/>
</dbReference>
<protein>
    <recommendedName>
        <fullName evidence="2">Type II restriction enzyme MthZI</fullName>
        <shortName evidence="4">R.MthZI</shortName>
        <ecNumber evidence="1">3.1.21.4</ecNumber>
    </recommendedName>
    <alternativeName>
        <fullName>Endonuclease MthZI</fullName>
    </alternativeName>
    <alternativeName>
        <fullName>Type-2 restriction enzyme MthZI</fullName>
    </alternativeName>
</protein>
<feature type="chain" id="PRO_0000077340" description="Type II restriction enzyme MthZI">
    <location>
        <begin position="1"/>
        <end position="202"/>
    </location>
</feature>
<reference key="1">
    <citation type="journal article" date="1992" name="Nucleic Acids Res.">
        <title>Identification of the CTAG-recognizing restriction-modification systems MthZI and MthFI from Methanobacterium thermoformicicum and characterization of the plasmid-encoded mthZIM gene.</title>
        <authorList>
            <person name="Noelling J."/>
            <person name="de Vos W.M."/>
        </authorList>
    </citation>
    <scope>NUCLEOTIDE SEQUENCE [GENOMIC DNA]</scope>
    <scope>FUNCTION</scope>
    <scope>CATALYTIC ACTIVITY</scope>
    <source>
        <strain>DSM 3720 / Z-245</strain>
    </source>
</reference>
<reference key="2">
    <citation type="journal article" date="1992" name="Nucleic Acids Res.">
        <title>Modular organization of related Archaeal plasmids encoding different restriction-modification systems in Methanobacterium thermoformicicum.</title>
        <authorList>
            <person name="Noelling J."/>
            <person name="van Eeden F.J.M."/>
            <person name="Eggen R.I.L."/>
            <person name="de Vos W.M."/>
        </authorList>
    </citation>
    <scope>NUCLEOTIDE SEQUENCE [GENOMIC DNA]</scope>
    <source>
        <strain>DSM 3720 / Z-245</strain>
    </source>
</reference>
<reference key="3">
    <citation type="journal article" date="2003" name="Nucleic Acids Res.">
        <title>A nomenclature for restriction enzymes, DNA methyltransferases, homing endonucleases and their genes.</title>
        <authorList>
            <person name="Roberts R.J."/>
            <person name="Belfort M."/>
            <person name="Bestor T."/>
            <person name="Bhagwat A.S."/>
            <person name="Bickle T.A."/>
            <person name="Bitinaite J."/>
            <person name="Blumenthal R.M."/>
            <person name="Degtyarev S.K."/>
            <person name="Dryden D.T."/>
            <person name="Dybvig K."/>
            <person name="Firman K."/>
            <person name="Gromova E.S."/>
            <person name="Gumport R.I."/>
            <person name="Halford S.E."/>
            <person name="Hattman S."/>
            <person name="Heitman J."/>
            <person name="Hornby D.P."/>
            <person name="Janulaitis A."/>
            <person name="Jeltsch A."/>
            <person name="Josephsen J."/>
            <person name="Kiss A."/>
            <person name="Klaenhammer T.R."/>
            <person name="Kobayashi I."/>
            <person name="Kong H."/>
            <person name="Krueger D.H."/>
            <person name="Lacks S."/>
            <person name="Marinus M.G."/>
            <person name="Miyahara M."/>
            <person name="Morgan R.D."/>
            <person name="Murray N.E."/>
            <person name="Nagaraja V."/>
            <person name="Piekarowicz A."/>
            <person name="Pingoud A."/>
            <person name="Raleigh E."/>
            <person name="Rao D.N."/>
            <person name="Reich N."/>
            <person name="Repin V.E."/>
            <person name="Selker E.U."/>
            <person name="Shaw P.C."/>
            <person name="Stein D.C."/>
            <person name="Stoddard B.L."/>
            <person name="Szybalski W."/>
            <person name="Trautner T.A."/>
            <person name="Van Etten J.L."/>
            <person name="Vitor J.M."/>
            <person name="Wilson G.G."/>
            <person name="Xu S.Y."/>
        </authorList>
    </citation>
    <scope>NOMENCLATURE</scope>
    <scope>SUBTYPE</scope>
</reference>
<accession>P29566</accession>
<proteinExistence type="evidence at protein level"/>
<keyword id="KW-0255">Endonuclease</keyword>
<keyword id="KW-0378">Hydrolase</keyword>
<keyword id="KW-0540">Nuclease</keyword>
<keyword id="KW-0614">Plasmid</keyword>
<keyword id="KW-0680">Restriction system</keyword>
<comment type="function">
    <text evidence="1 3">A P subtype restriction enzyme that recognizes the double-stranded sequence 5'-CTAG-3' and cleaves after C-1.</text>
</comment>
<comment type="catalytic activity">
    <reaction evidence="1">
        <text>Endonucleolytic cleavage of DNA to give specific double-stranded fragments with terminal 5'-phosphates.</text>
        <dbReference type="EC" id="3.1.21.4"/>
    </reaction>
</comment>
<geneLocation type="plasmid">
    <name>pFZ1</name>
</geneLocation>
<sequence>MIDNFKEIRLDFKDELKKITGKEVEFPKYTTQIINLANQNAQGTRPRVVGQMSDLIHECPDKSYEGWKKWYLEHYSDRIEKATKKISKMIENMKAAMELIDEEMIRKWVEDLVITKTAEGLIIQEIILKTIAEEAGLEWRLATSKEESKNIDGFIGSTPVSIKPMSYESMRPTVREEIDIQTIFYKKPKNSRYLYIYHNLNI</sequence>
<organism>
    <name type="scientific">Methanothermobacter thermautotrophicus</name>
    <name type="common">Methanobacterium thermoformicicum</name>
    <dbReference type="NCBI Taxonomy" id="145262"/>
    <lineage>
        <taxon>Archaea</taxon>
        <taxon>Methanobacteriati</taxon>
        <taxon>Methanobacteriota</taxon>
        <taxon>Methanomada group</taxon>
        <taxon>Methanobacteria</taxon>
        <taxon>Methanobacteriales</taxon>
        <taxon>Methanobacteriaceae</taxon>
        <taxon>Methanothermobacter</taxon>
    </lineage>
</organism>